<evidence type="ECO:0000250" key="1">
    <source>
        <dbReference type="UniProtKB" id="O93409"/>
    </source>
</evidence>
<evidence type="ECO:0000250" key="2">
    <source>
        <dbReference type="UniProtKB" id="P02608"/>
    </source>
</evidence>
<evidence type="ECO:0000250" key="3">
    <source>
        <dbReference type="UniProtKB" id="P04466"/>
    </source>
</evidence>
<evidence type="ECO:0000250" key="4">
    <source>
        <dbReference type="UniProtKB" id="P97457"/>
    </source>
</evidence>
<evidence type="ECO:0000255" key="5">
    <source>
        <dbReference type="PROSITE-ProRule" id="PRU00448"/>
    </source>
</evidence>
<evidence type="ECO:0000305" key="6"/>
<evidence type="ECO:0000312" key="7">
    <source>
        <dbReference type="EMBL" id="AAI20432.1"/>
    </source>
</evidence>
<protein>
    <recommendedName>
        <fullName>Myosin regulatory light chain 2, skeletal muscle isoform</fullName>
    </recommendedName>
    <alternativeName>
        <fullName>Fast skeletal myosin light chain 2</fullName>
    </alternativeName>
    <alternativeName>
        <fullName>MLC2F</fullName>
    </alternativeName>
</protein>
<gene>
    <name evidence="4" type="primary">MYLPF</name>
</gene>
<proteinExistence type="evidence at transcript level"/>
<sequence length="170" mass="19013">MAPKKAKRRAAAEGGSSSVFSMFDQTQIQEFKEAFTVIDQNRDGIIDKEDLRDTFAAMGRLNVKNEELDAMMKEASGPINFTVFLNMFGEKLKGADPEDVITGAFKVLDPEGKGTIKKKFLEELLTTQCDRFSQEEIKNMWAAFPPDVGGNVDYKNICYVITHGDAKDQE</sequence>
<keyword id="KW-0106">Calcium</keyword>
<keyword id="KW-0479">Metal-binding</keyword>
<keyword id="KW-0488">Methylation</keyword>
<keyword id="KW-0505">Motor protein</keyword>
<keyword id="KW-0514">Muscle protein</keyword>
<keyword id="KW-0518">Myosin</keyword>
<keyword id="KW-0597">Phosphoprotein</keyword>
<keyword id="KW-1185">Reference proteome</keyword>
<keyword id="KW-0677">Repeat</keyword>
<feature type="initiator methionine" description="Removed" evidence="2">
    <location>
        <position position="1"/>
    </location>
</feature>
<feature type="chain" id="PRO_0000283745" description="Myosin regulatory light chain 2, skeletal muscle isoform" evidence="2">
    <location>
        <begin position="2"/>
        <end position="170"/>
    </location>
</feature>
<feature type="domain" description="EF-hand 1" evidence="5">
    <location>
        <begin position="26"/>
        <end position="61"/>
    </location>
</feature>
<feature type="domain" description="EF-hand 2" evidence="5">
    <location>
        <begin position="96"/>
        <end position="131"/>
    </location>
</feature>
<feature type="domain" description="EF-hand 3" evidence="5">
    <location>
        <begin position="132"/>
        <end position="167"/>
    </location>
</feature>
<feature type="binding site" evidence="5">
    <location>
        <position position="39"/>
    </location>
    <ligand>
        <name>Ca(2+)</name>
        <dbReference type="ChEBI" id="CHEBI:29108"/>
    </ligand>
</feature>
<feature type="binding site" evidence="5">
    <location>
        <position position="41"/>
    </location>
    <ligand>
        <name>Ca(2+)</name>
        <dbReference type="ChEBI" id="CHEBI:29108"/>
    </ligand>
</feature>
<feature type="binding site" evidence="5">
    <location>
        <position position="43"/>
    </location>
    <ligand>
        <name>Ca(2+)</name>
        <dbReference type="ChEBI" id="CHEBI:29108"/>
    </ligand>
</feature>
<feature type="binding site" evidence="5">
    <location>
        <position position="50"/>
    </location>
    <ligand>
        <name>Ca(2+)</name>
        <dbReference type="ChEBI" id="CHEBI:29108"/>
    </ligand>
</feature>
<feature type="modified residue" description="N,N,N-trimethylalanine" evidence="2">
    <location>
        <position position="2"/>
    </location>
</feature>
<feature type="modified residue" description="Phosphoserine" evidence="4">
    <location>
        <position position="16"/>
    </location>
</feature>
<feature type="modified residue" description="Phosphoserine" evidence="4">
    <location>
        <position position="17"/>
    </location>
</feature>
<feature type="modified residue" description="Phosphothreonine" evidence="3">
    <location>
        <position position="26"/>
    </location>
</feature>
<feature type="modified residue" description="Phosphothreonine" evidence="3">
    <location>
        <position position="36"/>
    </location>
</feature>
<feature type="modified residue" description="Phosphoserine" evidence="3">
    <location>
        <position position="76"/>
    </location>
</feature>
<feature type="modified residue" description="Phosphothreonine" evidence="3">
    <location>
        <position position="102"/>
    </location>
</feature>
<name>MLRS_BOVIN</name>
<comment type="function">
    <text evidence="1">Plays a role in muscle contraction.</text>
</comment>
<comment type="subunit">
    <text>Myosin is a hexamer of 2 heavy chains and 4 light chains.</text>
</comment>
<comment type="miscellaneous">
    <text evidence="6">This chain binds calcium.</text>
</comment>
<reference evidence="7" key="1">
    <citation type="submission" date="2006-08" db="EMBL/GenBank/DDBJ databases">
        <authorList>
            <consortium name="NIH - Mammalian Gene Collection (MGC) project"/>
        </authorList>
    </citation>
    <scope>NUCLEOTIDE SEQUENCE [LARGE SCALE MRNA]</scope>
    <source>
        <strain evidence="7">Hereford</strain>
        <tissue evidence="7">Fetal muscle</tissue>
    </source>
</reference>
<accession>Q0P571</accession>
<organism>
    <name type="scientific">Bos taurus</name>
    <name type="common">Bovine</name>
    <dbReference type="NCBI Taxonomy" id="9913"/>
    <lineage>
        <taxon>Eukaryota</taxon>
        <taxon>Metazoa</taxon>
        <taxon>Chordata</taxon>
        <taxon>Craniata</taxon>
        <taxon>Vertebrata</taxon>
        <taxon>Euteleostomi</taxon>
        <taxon>Mammalia</taxon>
        <taxon>Eutheria</taxon>
        <taxon>Laurasiatheria</taxon>
        <taxon>Artiodactyla</taxon>
        <taxon>Ruminantia</taxon>
        <taxon>Pecora</taxon>
        <taxon>Bovidae</taxon>
        <taxon>Bovinae</taxon>
        <taxon>Bos</taxon>
    </lineage>
</organism>
<dbReference type="EMBL" id="BC120431">
    <property type="protein sequence ID" value="AAI20432.1"/>
    <property type="molecule type" value="mRNA"/>
</dbReference>
<dbReference type="RefSeq" id="NP_001069115.1">
    <property type="nucleotide sequence ID" value="NM_001075647.1"/>
</dbReference>
<dbReference type="SMR" id="Q0P571"/>
<dbReference type="FunCoup" id="Q0P571">
    <property type="interactions" value="276"/>
</dbReference>
<dbReference type="STRING" id="9913.ENSBTAP00000065724"/>
<dbReference type="PaxDb" id="9913-ENSBTAP00000028269"/>
<dbReference type="Ensembl" id="ENSBTAT00000084345.2">
    <property type="protein sequence ID" value="ENSBTAP00000065724.1"/>
    <property type="gene ID" value="ENSBTAG00000021218.6"/>
</dbReference>
<dbReference type="GeneID" id="514106"/>
<dbReference type="KEGG" id="bta:514106"/>
<dbReference type="CTD" id="29895"/>
<dbReference type="VEuPathDB" id="HostDB:ENSBTAG00000021218"/>
<dbReference type="VGNC" id="VGNC:31809">
    <property type="gene designation" value="MYL11"/>
</dbReference>
<dbReference type="eggNOG" id="KOG0031">
    <property type="taxonomic scope" value="Eukaryota"/>
</dbReference>
<dbReference type="GeneTree" id="ENSGT00940000159038"/>
<dbReference type="HOGENOM" id="CLU_061288_9_0_1"/>
<dbReference type="InParanoid" id="Q0P571"/>
<dbReference type="OMA" id="KDLYAMM"/>
<dbReference type="OrthoDB" id="429467at2759"/>
<dbReference type="TreeFam" id="TF314218"/>
<dbReference type="Reactome" id="R-BTA-445355">
    <property type="pathway name" value="Smooth Muscle Contraction"/>
</dbReference>
<dbReference type="Proteomes" id="UP000009136">
    <property type="component" value="Chromosome 25"/>
</dbReference>
<dbReference type="Bgee" id="ENSBTAG00000021218">
    <property type="expression patterns" value="Expressed in biceps femoris and 87 other cell types or tissues"/>
</dbReference>
<dbReference type="GO" id="GO:0005737">
    <property type="term" value="C:cytoplasm"/>
    <property type="evidence" value="ECO:0000318"/>
    <property type="project" value="GO_Central"/>
</dbReference>
<dbReference type="GO" id="GO:0016459">
    <property type="term" value="C:myosin complex"/>
    <property type="evidence" value="ECO:0007669"/>
    <property type="project" value="UniProtKB-KW"/>
</dbReference>
<dbReference type="GO" id="GO:0005509">
    <property type="term" value="F:calcium ion binding"/>
    <property type="evidence" value="ECO:0000318"/>
    <property type="project" value="GO_Central"/>
</dbReference>
<dbReference type="GO" id="GO:0008307">
    <property type="term" value="F:structural constituent of muscle"/>
    <property type="evidence" value="ECO:0007669"/>
    <property type="project" value="Ensembl"/>
</dbReference>
<dbReference type="GO" id="GO:0006936">
    <property type="term" value="P:muscle contraction"/>
    <property type="evidence" value="ECO:0007669"/>
    <property type="project" value="Ensembl"/>
</dbReference>
<dbReference type="GO" id="GO:0007519">
    <property type="term" value="P:skeletal muscle tissue development"/>
    <property type="evidence" value="ECO:0000318"/>
    <property type="project" value="GO_Central"/>
</dbReference>
<dbReference type="FunFam" id="1.10.238.10:FF:000010">
    <property type="entry name" value="Myosin regulatory light chain 2, atrial isoform"/>
    <property type="match status" value="1"/>
</dbReference>
<dbReference type="FunFam" id="1.10.238.10:FF:000007">
    <property type="entry name" value="Putative myosin regulatory light chain sqh"/>
    <property type="match status" value="1"/>
</dbReference>
<dbReference type="Gene3D" id="1.10.238.10">
    <property type="entry name" value="EF-hand"/>
    <property type="match status" value="2"/>
</dbReference>
<dbReference type="InterPro" id="IPR011992">
    <property type="entry name" value="EF-hand-dom_pair"/>
</dbReference>
<dbReference type="InterPro" id="IPR018247">
    <property type="entry name" value="EF_Hand_1_Ca_BS"/>
</dbReference>
<dbReference type="InterPro" id="IPR002048">
    <property type="entry name" value="EF_hand_dom"/>
</dbReference>
<dbReference type="InterPro" id="IPR050403">
    <property type="entry name" value="Myosin_RLC"/>
</dbReference>
<dbReference type="PANTHER" id="PTHR23049">
    <property type="entry name" value="MYOSIN REGULATORY LIGHT CHAIN 2"/>
    <property type="match status" value="1"/>
</dbReference>
<dbReference type="Pfam" id="PF13405">
    <property type="entry name" value="EF-hand_6"/>
    <property type="match status" value="1"/>
</dbReference>
<dbReference type="SMART" id="SM00054">
    <property type="entry name" value="EFh"/>
    <property type="match status" value="2"/>
</dbReference>
<dbReference type="SUPFAM" id="SSF47473">
    <property type="entry name" value="EF-hand"/>
    <property type="match status" value="1"/>
</dbReference>
<dbReference type="PROSITE" id="PS00018">
    <property type="entry name" value="EF_HAND_1"/>
    <property type="match status" value="1"/>
</dbReference>
<dbReference type="PROSITE" id="PS50222">
    <property type="entry name" value="EF_HAND_2"/>
    <property type="match status" value="3"/>
</dbReference>